<dbReference type="EMBL" id="CP000730">
    <property type="protein sequence ID" value="ABX30226.1"/>
    <property type="molecule type" value="Genomic_DNA"/>
</dbReference>
<dbReference type="RefSeq" id="WP_000644737.1">
    <property type="nucleotide sequence ID" value="NC_010079.1"/>
</dbReference>
<dbReference type="SMR" id="A8Z349"/>
<dbReference type="GeneID" id="98346554"/>
<dbReference type="KEGG" id="sax:USA300HOU_2233"/>
<dbReference type="HOGENOM" id="CLU_158491_5_2_9"/>
<dbReference type="GO" id="GO:0022625">
    <property type="term" value="C:cytosolic large ribosomal subunit"/>
    <property type="evidence" value="ECO:0007669"/>
    <property type="project" value="TreeGrafter"/>
</dbReference>
<dbReference type="GO" id="GO:0003735">
    <property type="term" value="F:structural constituent of ribosome"/>
    <property type="evidence" value="ECO:0007669"/>
    <property type="project" value="InterPro"/>
</dbReference>
<dbReference type="GO" id="GO:0006412">
    <property type="term" value="P:translation"/>
    <property type="evidence" value="ECO:0007669"/>
    <property type="project" value="UniProtKB-UniRule"/>
</dbReference>
<dbReference type="CDD" id="cd00427">
    <property type="entry name" value="Ribosomal_L29_HIP"/>
    <property type="match status" value="1"/>
</dbReference>
<dbReference type="FunFam" id="1.10.287.310:FF:000001">
    <property type="entry name" value="50S ribosomal protein L29"/>
    <property type="match status" value="1"/>
</dbReference>
<dbReference type="Gene3D" id="1.10.287.310">
    <property type="match status" value="1"/>
</dbReference>
<dbReference type="HAMAP" id="MF_00374">
    <property type="entry name" value="Ribosomal_uL29"/>
    <property type="match status" value="1"/>
</dbReference>
<dbReference type="InterPro" id="IPR050063">
    <property type="entry name" value="Ribosomal_protein_uL29"/>
</dbReference>
<dbReference type="InterPro" id="IPR001854">
    <property type="entry name" value="Ribosomal_uL29"/>
</dbReference>
<dbReference type="InterPro" id="IPR036049">
    <property type="entry name" value="Ribosomal_uL29_sf"/>
</dbReference>
<dbReference type="NCBIfam" id="TIGR00012">
    <property type="entry name" value="L29"/>
    <property type="match status" value="1"/>
</dbReference>
<dbReference type="PANTHER" id="PTHR10916">
    <property type="entry name" value="60S RIBOSOMAL PROTEIN L35/50S RIBOSOMAL PROTEIN L29"/>
    <property type="match status" value="1"/>
</dbReference>
<dbReference type="PANTHER" id="PTHR10916:SF0">
    <property type="entry name" value="LARGE RIBOSOMAL SUBUNIT PROTEIN UL29C"/>
    <property type="match status" value="1"/>
</dbReference>
<dbReference type="Pfam" id="PF00831">
    <property type="entry name" value="Ribosomal_L29"/>
    <property type="match status" value="1"/>
</dbReference>
<dbReference type="SUPFAM" id="SSF46561">
    <property type="entry name" value="Ribosomal protein L29 (L29p)"/>
    <property type="match status" value="1"/>
</dbReference>
<gene>
    <name evidence="1" type="primary">rpmC</name>
    <name type="ordered locus">USA300HOU_2233</name>
</gene>
<sequence>MKAKEIRDLTTSEIEEQIKSSKEELFNLRFQLATGQLEETARIRTVRKTIARLKTVAREREIEQSKANQ</sequence>
<organism>
    <name type="scientific">Staphylococcus aureus (strain USA300 / TCH1516)</name>
    <dbReference type="NCBI Taxonomy" id="451516"/>
    <lineage>
        <taxon>Bacteria</taxon>
        <taxon>Bacillati</taxon>
        <taxon>Bacillota</taxon>
        <taxon>Bacilli</taxon>
        <taxon>Bacillales</taxon>
        <taxon>Staphylococcaceae</taxon>
        <taxon>Staphylococcus</taxon>
    </lineage>
</organism>
<feature type="chain" id="PRO_1000079911" description="Large ribosomal subunit protein uL29">
    <location>
        <begin position="1"/>
        <end position="69"/>
    </location>
</feature>
<proteinExistence type="inferred from homology"/>
<evidence type="ECO:0000255" key="1">
    <source>
        <dbReference type="HAMAP-Rule" id="MF_00374"/>
    </source>
</evidence>
<evidence type="ECO:0000305" key="2"/>
<reference key="1">
    <citation type="journal article" date="2007" name="BMC Microbiol.">
        <title>Subtle genetic changes enhance virulence of methicillin resistant and sensitive Staphylococcus aureus.</title>
        <authorList>
            <person name="Highlander S.K."/>
            <person name="Hulten K.G."/>
            <person name="Qin X."/>
            <person name="Jiang H."/>
            <person name="Yerrapragada S."/>
            <person name="Mason E.O. Jr."/>
            <person name="Shang Y."/>
            <person name="Williams T.M."/>
            <person name="Fortunov R.M."/>
            <person name="Liu Y."/>
            <person name="Igboeli O."/>
            <person name="Petrosino J."/>
            <person name="Tirumalai M."/>
            <person name="Uzman A."/>
            <person name="Fox G.E."/>
            <person name="Cardenas A.M."/>
            <person name="Muzny D.M."/>
            <person name="Hemphill L."/>
            <person name="Ding Y."/>
            <person name="Dugan S."/>
            <person name="Blyth P.R."/>
            <person name="Buhay C.J."/>
            <person name="Dinh H.H."/>
            <person name="Hawes A.C."/>
            <person name="Holder M."/>
            <person name="Kovar C.L."/>
            <person name="Lee S.L."/>
            <person name="Liu W."/>
            <person name="Nazareth L.V."/>
            <person name="Wang Q."/>
            <person name="Zhou J."/>
            <person name="Kaplan S.L."/>
            <person name="Weinstock G.M."/>
        </authorList>
    </citation>
    <scope>NUCLEOTIDE SEQUENCE [LARGE SCALE GENOMIC DNA]</scope>
    <source>
        <strain>USA300 / TCH1516</strain>
    </source>
</reference>
<keyword id="KW-0687">Ribonucleoprotein</keyword>
<keyword id="KW-0689">Ribosomal protein</keyword>
<accession>A8Z349</accession>
<comment type="similarity">
    <text evidence="1">Belongs to the universal ribosomal protein uL29 family.</text>
</comment>
<protein>
    <recommendedName>
        <fullName evidence="1">Large ribosomal subunit protein uL29</fullName>
    </recommendedName>
    <alternativeName>
        <fullName evidence="2">50S ribosomal protein L29</fullName>
    </alternativeName>
</protein>
<name>RL29_STAAT</name>